<name>NA15_ANTXA</name>
<reference key="1">
    <citation type="journal article" date="1998" name="Toxicon">
        <title>Identification and characterization of novel sodium channel toxins from the sea anemone Anthopleura xanthogrammica.</title>
        <authorList>
            <person name="Kelso G.J."/>
            <person name="Blumenthal K.M."/>
        </authorList>
    </citation>
    <scope>NUCLEOTIDE SEQUENCE [MRNA]</scope>
    <source>
        <tissue>Tentacle</tissue>
    </source>
</reference>
<reference key="2">
    <citation type="journal article" date="2012" name="Toxicon">
        <title>Development of a rational nomenclature for naming peptide and protein toxins from sea anemones.</title>
        <authorList>
            <person name="Oliveira J.S."/>
            <person name="Fuentes-Silva D."/>
            <person name="King G.F."/>
        </authorList>
    </citation>
    <scope>NOMENCLATURE</scope>
</reference>
<sequence length="47" mass="4817">GVSCLCDSDGPSVSGNTLSGIIWLAGCPSGWHNCKAHGPNIGWCCKK</sequence>
<evidence type="ECO:0000250" key="1">
    <source>
        <dbReference type="UniProtKB" id="P10454"/>
    </source>
</evidence>
<evidence type="ECO:0000269" key="2">
    <source>
    </source>
</evidence>
<evidence type="ECO:0000303" key="3">
    <source>
    </source>
</evidence>
<evidence type="ECO:0000303" key="4">
    <source>
    </source>
</evidence>
<evidence type="ECO:0000305" key="5"/>
<comment type="subcellular location">
    <subcellularLocation>
        <location evidence="5">Secreted</location>
    </subcellularLocation>
    <subcellularLocation>
        <location evidence="5">Nematocyst</location>
    </subcellularLocation>
</comment>
<comment type="miscellaneous">
    <text evidence="2">Is not active against sodium channels (Nav).</text>
</comment>
<comment type="similarity">
    <text evidence="5">Belongs to the sea anemone sodium channel inhibitory toxin family. Type I subfamily.</text>
</comment>
<accession>P0C5G2</accession>
<proteinExistence type="inferred from homology"/>
<organism>
    <name type="scientific">Anthopleura xanthogrammica</name>
    <name type="common">Giant green sea anemone</name>
    <name type="synonym">Actinia xanthogrammica</name>
    <dbReference type="NCBI Taxonomy" id="6112"/>
    <lineage>
        <taxon>Eukaryota</taxon>
        <taxon>Metazoa</taxon>
        <taxon>Cnidaria</taxon>
        <taxon>Anthozoa</taxon>
        <taxon>Hexacorallia</taxon>
        <taxon>Actiniaria</taxon>
        <taxon>Actiniidae</taxon>
        <taxon>Anthopleura</taxon>
    </lineage>
</organism>
<dbReference type="SMR" id="P0C5G2"/>
<dbReference type="GO" id="GO:0005576">
    <property type="term" value="C:extracellular region"/>
    <property type="evidence" value="ECO:0007669"/>
    <property type="project" value="UniProtKB-SubCell"/>
</dbReference>
<dbReference type="GO" id="GO:0042151">
    <property type="term" value="C:nematocyst"/>
    <property type="evidence" value="ECO:0007669"/>
    <property type="project" value="UniProtKB-SubCell"/>
</dbReference>
<dbReference type="GO" id="GO:0017080">
    <property type="term" value="F:sodium channel regulator activity"/>
    <property type="evidence" value="ECO:0007669"/>
    <property type="project" value="UniProtKB-KW"/>
</dbReference>
<dbReference type="GO" id="GO:0090729">
    <property type="term" value="F:toxin activity"/>
    <property type="evidence" value="ECO:0007669"/>
    <property type="project" value="UniProtKB-KW"/>
</dbReference>
<dbReference type="GO" id="GO:0009966">
    <property type="term" value="P:regulation of signal transduction"/>
    <property type="evidence" value="ECO:0007669"/>
    <property type="project" value="InterPro"/>
</dbReference>
<dbReference type="Gene3D" id="2.20.20.10">
    <property type="entry name" value="Anthopleurin-A"/>
    <property type="match status" value="1"/>
</dbReference>
<dbReference type="InterPro" id="IPR000693">
    <property type="entry name" value="Anenome_toxin"/>
</dbReference>
<dbReference type="InterPro" id="IPR023355">
    <property type="entry name" value="Myo_ane_neurotoxin_sf"/>
</dbReference>
<dbReference type="Pfam" id="PF00706">
    <property type="entry name" value="Toxin_4"/>
    <property type="match status" value="1"/>
</dbReference>
<dbReference type="PIRSF" id="PIRSF001905">
    <property type="entry name" value="Anenome_toxin"/>
    <property type="match status" value="1"/>
</dbReference>
<dbReference type="SUPFAM" id="SSF57392">
    <property type="entry name" value="Defensin-like"/>
    <property type="match status" value="1"/>
</dbReference>
<keyword id="KW-1015">Disulfide bond</keyword>
<keyword id="KW-0166">Nematocyst</keyword>
<keyword id="KW-0964">Secreted</keyword>
<protein>
    <recommendedName>
        <fullName evidence="3">Delta-actitoxin-Axm1g</fullName>
        <shortName evidence="3">Delta-AITX-Axm1g</shortName>
    </recommendedName>
    <alternativeName>
        <fullName evidence="4">PCR3-6</fullName>
    </alternativeName>
    <alternativeName>
        <fullName evidence="5">Toxin PCR5</fullName>
    </alternativeName>
</protein>
<feature type="chain" id="PRO_0000305116" description="Delta-actitoxin-Axm1g">
    <location>
        <begin position="1"/>
        <end position="47"/>
    </location>
</feature>
<feature type="disulfide bond" evidence="1">
    <location>
        <begin position="4"/>
        <end position="44"/>
    </location>
</feature>
<feature type="disulfide bond" evidence="1">
    <location>
        <begin position="6"/>
        <end position="34"/>
    </location>
</feature>
<feature type="disulfide bond" evidence="1">
    <location>
        <begin position="27"/>
        <end position="45"/>
    </location>
</feature>